<keyword id="KW-0002">3D-structure</keyword>
<keyword id="KW-0221">Differentiation</keyword>
<keyword id="KW-0325">Glycoprotein</keyword>
<keyword id="KW-0357">Heparan sulfate</keyword>
<keyword id="KW-0472">Membrane</keyword>
<keyword id="KW-0524">Neurogenesis</keyword>
<keyword id="KW-0597">Phosphoprotein</keyword>
<keyword id="KW-0654">Proteoglycan</keyword>
<keyword id="KW-1267">Proteomics identification</keyword>
<keyword id="KW-1185">Reference proteome</keyword>
<keyword id="KW-0732">Signal</keyword>
<keyword id="KW-0812">Transmembrane</keyword>
<keyword id="KW-1133">Transmembrane helix</keyword>
<organism>
    <name type="scientific">Homo sapiens</name>
    <name type="common">Human</name>
    <dbReference type="NCBI Taxonomy" id="9606"/>
    <lineage>
        <taxon>Eukaryota</taxon>
        <taxon>Metazoa</taxon>
        <taxon>Chordata</taxon>
        <taxon>Craniata</taxon>
        <taxon>Vertebrata</taxon>
        <taxon>Euteleostomi</taxon>
        <taxon>Mammalia</taxon>
        <taxon>Eutheria</taxon>
        <taxon>Euarchontoglires</taxon>
        <taxon>Primates</taxon>
        <taxon>Haplorrhini</taxon>
        <taxon>Catarrhini</taxon>
        <taxon>Hominidae</taxon>
        <taxon>Homo</taxon>
    </lineage>
</organism>
<comment type="function">
    <text evidence="1">Cell surface proteoglycan which regulates dendritic arbor morphogenesis.</text>
</comment>
<comment type="subunit">
    <text evidence="1 7">Interacts (via cytoplasmic domain) with SARM1 (By similarity). Forms a complex with SDCBP and PDCD6IP (PubMed:22660413).</text>
</comment>
<comment type="interaction">
    <interactant intactId="EBI-1172957">
        <id>P34741</id>
    </interactant>
    <interactant intactId="EBI-12092171">
        <id>Q12797-6</id>
        <label>ASPH</label>
    </interactant>
    <organismsDiffer>false</organismsDiffer>
    <experiments>5</experiments>
</comment>
<comment type="interaction">
    <interactant intactId="EBI-1172957">
        <id>P34741</id>
    </interactant>
    <interactant intactId="EBI-1215506">
        <id>O14936</id>
        <label>CASK</label>
    </interactant>
    <organismsDiffer>false</organismsDiffer>
    <experiments>2</experiments>
</comment>
<comment type="interaction">
    <interactant intactId="EBI-1172957">
        <id>P34741</id>
    </interactant>
    <interactant intactId="EBI-10976677">
        <id>G5E9A7</id>
        <label>DMWD</label>
    </interactant>
    <organismsDiffer>false</organismsDiffer>
    <experiments>3</experiments>
</comment>
<comment type="interaction">
    <interactant intactId="EBI-1172957">
        <id>P34741</id>
    </interactant>
    <interactant intactId="EBI-10213520">
        <id>Q6NXG1</id>
        <label>ESRP1</label>
    </interactant>
    <organismsDiffer>false</organismsDiffer>
    <experiments>3</experiments>
</comment>
<comment type="interaction">
    <interactant intactId="EBI-1172957">
        <id>P34741</id>
    </interactant>
    <interactant intactId="EBI-15639515">
        <id>O15354</id>
        <label>GPR37</label>
    </interactant>
    <organismsDiffer>false</organismsDiffer>
    <experiments>3</experiments>
</comment>
<comment type="interaction">
    <interactant intactId="EBI-1172957">
        <id>P34741</id>
    </interactant>
    <interactant intactId="EBI-747754">
        <id>P28799</id>
        <label>GRN</label>
    </interactant>
    <organismsDiffer>false</organismsDiffer>
    <experiments>3</experiments>
</comment>
<comment type="interaction">
    <interactant intactId="EBI-1172957">
        <id>P34741</id>
    </interactant>
    <interactant intactId="EBI-25860013">
        <id>P28799-2</id>
        <label>GRN</label>
    </interactant>
    <organismsDiffer>false</organismsDiffer>
    <experiments>3</experiments>
</comment>
<comment type="interaction">
    <interactant intactId="EBI-1172957">
        <id>P34741</id>
    </interactant>
    <interactant intactId="EBI-10975473">
        <id>O60333-2</id>
        <label>KIF1B</label>
    </interactant>
    <organismsDiffer>false</organismsDiffer>
    <experiments>3</experiments>
</comment>
<comment type="interaction">
    <interactant intactId="EBI-1172957">
        <id>P34741</id>
    </interactant>
    <interactant intactId="EBI-12345753">
        <id>Q13387-4</id>
        <label>MAPK8IP2</label>
    </interactant>
    <organismsDiffer>false</organismsDiffer>
    <experiments>3</experiments>
</comment>
<comment type="interaction">
    <interactant intactId="EBI-1172957">
        <id>P34741</id>
    </interactant>
    <interactant intactId="EBI-12135485">
        <id>P41271-2</id>
        <label>NBL1</label>
    </interactant>
    <organismsDiffer>false</organismsDiffer>
    <experiments>3</experiments>
</comment>
<comment type="interaction">
    <interactant intactId="EBI-1172957">
        <id>P34741</id>
    </interactant>
    <interactant intactId="EBI-1172917">
        <id>P21359</id>
        <label>NF1</label>
    </interactant>
    <organismsDiffer>false</organismsDiffer>
    <experiments>4</experiments>
</comment>
<comment type="interaction">
    <interactant intactId="EBI-1172957">
        <id>P34741</id>
    </interactant>
    <interactant intactId="EBI-9090282">
        <id>P27986-2</id>
        <label>PIK3R1</label>
    </interactant>
    <organismsDiffer>false</organismsDiffer>
    <experiments>3</experiments>
</comment>
<comment type="interaction">
    <interactant intactId="EBI-1172957">
        <id>P34741</id>
    </interactant>
    <interactant intactId="EBI-396669">
        <id>Q9Y3C5</id>
        <label>RNF11</label>
    </interactant>
    <organismsDiffer>false</organismsDiffer>
    <experiments>3</experiments>
</comment>
<comment type="interaction">
    <interactant intactId="EBI-1172957">
        <id>P34741</id>
    </interactant>
    <interactant intactId="EBI-2855248">
        <id>P18827</id>
        <label>SDC1</label>
    </interactant>
    <organismsDiffer>false</organismsDiffer>
    <experiments>3</experiments>
</comment>
<comment type="interaction">
    <interactant intactId="EBI-1172957">
        <id>P34741</id>
    </interactant>
    <interactant intactId="EBI-1172957">
        <id>P34741</id>
        <label>SDC2</label>
    </interactant>
    <organismsDiffer>false</organismsDiffer>
    <experiments>4</experiments>
</comment>
<comment type="interaction">
    <interactant intactId="EBI-1172957">
        <id>P34741</id>
    </interactant>
    <interactant intactId="EBI-1642090">
        <id>O75056</id>
        <label>SDC3</label>
    </interactant>
    <organismsDiffer>false</organismsDiffer>
    <experiments>2</experiments>
</comment>
<comment type="interaction">
    <interactant intactId="EBI-1172957">
        <id>P34741</id>
    </interactant>
    <interactant intactId="EBI-3913237">
        <id>P31431</id>
        <label>SDC4</label>
    </interactant>
    <organismsDiffer>false</organismsDiffer>
    <experiments>4</experiments>
</comment>
<comment type="interaction">
    <interactant intactId="EBI-1172957">
        <id>P34741</id>
    </interactant>
    <interactant intactId="EBI-5235340">
        <id>Q7Z699</id>
        <label>SPRED1</label>
    </interactant>
    <organismsDiffer>false</organismsDiffer>
    <experiments>3</experiments>
</comment>
<comment type="interaction">
    <interactant intactId="EBI-1172957">
        <id>P34741</id>
    </interactant>
    <interactant intactId="EBI-11123832">
        <id>O60506-4</id>
        <label>SYNCRIP</label>
    </interactant>
    <organismsDiffer>false</organismsDiffer>
    <experiments>3</experiments>
</comment>
<comment type="interaction">
    <interactant intactId="EBI-1172957">
        <id>P34741</id>
    </interactant>
    <interactant intactId="EBI-12117154">
        <id>O60784-2</id>
        <label>TOM1</label>
    </interactant>
    <organismsDiffer>false</organismsDiffer>
    <experiments>3</experiments>
</comment>
<comment type="interaction">
    <interactant intactId="EBI-1172957">
        <id>P34741</id>
    </interactant>
    <interactant intactId="EBI-720609">
        <id>O76024</id>
        <label>WFS1</label>
    </interactant>
    <organismsDiffer>false</organismsDiffer>
    <experiments>3</experiments>
</comment>
<comment type="subcellular location">
    <subcellularLocation>
        <location>Membrane</location>
        <topology>Single-pass type I membrane protein</topology>
    </subcellularLocation>
</comment>
<comment type="PTM">
    <text evidence="1 6">O-glycosylated with core 1 or possibly core 8 glycans. Contains heparan sulfate (PubMed:22171320). Also contains chondroitin sulfate (By similarity).</text>
</comment>
<comment type="similarity">
    <text evidence="10">Belongs to the syndecan proteoglycan family.</text>
</comment>
<comment type="sequence caution" evidence="10">
    <conflict type="erroneous initiation">
        <sequence resource="EMBL-CDS" id="AAA52701"/>
    </conflict>
    <text>Extended N-terminus.</text>
</comment>
<reference key="1">
    <citation type="journal article" date="1989" name="J. Biol. Chem.">
        <title>Partial primary structure of the 48- and 90-kilodalton core proteins of cell surface-associated heparan sulfate proteoglycans of lung fibroblasts. Prediction of an integral membrane domain and evidence for multiple distinct core proteins at the cell surface of human lung fibroblasts.</title>
        <authorList>
            <person name="Marynen P."/>
            <person name="Zhang J."/>
            <person name="Cassiman J.-J."/>
            <person name="den Berghe H."/>
            <person name="David G."/>
        </authorList>
    </citation>
    <scope>NUCLEOTIDE SEQUENCE [MRNA]</scope>
    <scope>VARIANT THR-71</scope>
    <source>
        <tissue>Lung fibroblast</tissue>
    </source>
</reference>
<reference key="2">
    <citation type="journal article" date="2004" name="Nat. Genet.">
        <title>Complete sequencing and characterization of 21,243 full-length human cDNAs.</title>
        <authorList>
            <person name="Ota T."/>
            <person name="Suzuki Y."/>
            <person name="Nishikawa T."/>
            <person name="Otsuki T."/>
            <person name="Sugiyama T."/>
            <person name="Irie R."/>
            <person name="Wakamatsu A."/>
            <person name="Hayashi K."/>
            <person name="Sato H."/>
            <person name="Nagai K."/>
            <person name="Kimura K."/>
            <person name="Makita H."/>
            <person name="Sekine M."/>
            <person name="Obayashi M."/>
            <person name="Nishi T."/>
            <person name="Shibahara T."/>
            <person name="Tanaka T."/>
            <person name="Ishii S."/>
            <person name="Yamamoto J."/>
            <person name="Saito K."/>
            <person name="Kawai Y."/>
            <person name="Isono Y."/>
            <person name="Nakamura Y."/>
            <person name="Nagahari K."/>
            <person name="Murakami K."/>
            <person name="Yasuda T."/>
            <person name="Iwayanagi T."/>
            <person name="Wagatsuma M."/>
            <person name="Shiratori A."/>
            <person name="Sudo H."/>
            <person name="Hosoiri T."/>
            <person name="Kaku Y."/>
            <person name="Kodaira H."/>
            <person name="Kondo H."/>
            <person name="Sugawara M."/>
            <person name="Takahashi M."/>
            <person name="Kanda K."/>
            <person name="Yokoi T."/>
            <person name="Furuya T."/>
            <person name="Kikkawa E."/>
            <person name="Omura Y."/>
            <person name="Abe K."/>
            <person name="Kamihara K."/>
            <person name="Katsuta N."/>
            <person name="Sato K."/>
            <person name="Tanikawa M."/>
            <person name="Yamazaki M."/>
            <person name="Ninomiya K."/>
            <person name="Ishibashi T."/>
            <person name="Yamashita H."/>
            <person name="Murakawa K."/>
            <person name="Fujimori K."/>
            <person name="Tanai H."/>
            <person name="Kimata M."/>
            <person name="Watanabe M."/>
            <person name="Hiraoka S."/>
            <person name="Chiba Y."/>
            <person name="Ishida S."/>
            <person name="Ono Y."/>
            <person name="Takiguchi S."/>
            <person name="Watanabe S."/>
            <person name="Yosida M."/>
            <person name="Hotuta T."/>
            <person name="Kusano J."/>
            <person name="Kanehori K."/>
            <person name="Takahashi-Fujii A."/>
            <person name="Hara H."/>
            <person name="Tanase T.-O."/>
            <person name="Nomura Y."/>
            <person name="Togiya S."/>
            <person name="Komai F."/>
            <person name="Hara R."/>
            <person name="Takeuchi K."/>
            <person name="Arita M."/>
            <person name="Imose N."/>
            <person name="Musashino K."/>
            <person name="Yuuki H."/>
            <person name="Oshima A."/>
            <person name="Sasaki N."/>
            <person name="Aotsuka S."/>
            <person name="Yoshikawa Y."/>
            <person name="Matsunawa H."/>
            <person name="Ichihara T."/>
            <person name="Shiohata N."/>
            <person name="Sano S."/>
            <person name="Moriya S."/>
            <person name="Momiyama H."/>
            <person name="Satoh N."/>
            <person name="Takami S."/>
            <person name="Terashima Y."/>
            <person name="Suzuki O."/>
            <person name="Nakagawa S."/>
            <person name="Senoh A."/>
            <person name="Mizoguchi H."/>
            <person name="Goto Y."/>
            <person name="Shimizu F."/>
            <person name="Wakebe H."/>
            <person name="Hishigaki H."/>
            <person name="Watanabe T."/>
            <person name="Sugiyama A."/>
            <person name="Takemoto M."/>
            <person name="Kawakami B."/>
            <person name="Yamazaki M."/>
            <person name="Watanabe K."/>
            <person name="Kumagai A."/>
            <person name="Itakura S."/>
            <person name="Fukuzumi Y."/>
            <person name="Fujimori Y."/>
            <person name="Komiyama M."/>
            <person name="Tashiro H."/>
            <person name="Tanigami A."/>
            <person name="Fujiwara T."/>
            <person name="Ono T."/>
            <person name="Yamada K."/>
            <person name="Fujii Y."/>
            <person name="Ozaki K."/>
            <person name="Hirao M."/>
            <person name="Ohmori Y."/>
            <person name="Kawabata A."/>
            <person name="Hikiji T."/>
            <person name="Kobatake N."/>
            <person name="Inagaki H."/>
            <person name="Ikema Y."/>
            <person name="Okamoto S."/>
            <person name="Okitani R."/>
            <person name="Kawakami T."/>
            <person name="Noguchi S."/>
            <person name="Itoh T."/>
            <person name="Shigeta K."/>
            <person name="Senba T."/>
            <person name="Matsumura K."/>
            <person name="Nakajima Y."/>
            <person name="Mizuno T."/>
            <person name="Morinaga M."/>
            <person name="Sasaki M."/>
            <person name="Togashi T."/>
            <person name="Oyama M."/>
            <person name="Hata H."/>
            <person name="Watanabe M."/>
            <person name="Komatsu T."/>
            <person name="Mizushima-Sugano J."/>
            <person name="Satoh T."/>
            <person name="Shirai Y."/>
            <person name="Takahashi Y."/>
            <person name="Nakagawa K."/>
            <person name="Okumura K."/>
            <person name="Nagase T."/>
            <person name="Nomura N."/>
            <person name="Kikuchi H."/>
            <person name="Masuho Y."/>
            <person name="Yamashita R."/>
            <person name="Nakai K."/>
            <person name="Yada T."/>
            <person name="Nakamura Y."/>
            <person name="Ohara O."/>
            <person name="Isogai T."/>
            <person name="Sugano S."/>
        </authorList>
    </citation>
    <scope>NUCLEOTIDE SEQUENCE [LARGE SCALE MRNA]</scope>
    <source>
        <tissue>Testis</tissue>
    </source>
</reference>
<reference key="3">
    <citation type="journal article" date="2005" name="DNA Res.">
        <title>Signal sequence and keyword trap in silico for selection of full-length human cDNAs encoding secretion or membrane proteins from oligo-capped cDNA libraries.</title>
        <authorList>
            <person name="Otsuki T."/>
            <person name="Ota T."/>
            <person name="Nishikawa T."/>
            <person name="Hayashi K."/>
            <person name="Suzuki Y."/>
            <person name="Yamamoto J."/>
            <person name="Wakamatsu A."/>
            <person name="Kimura K."/>
            <person name="Sakamoto K."/>
            <person name="Hatano N."/>
            <person name="Kawai Y."/>
            <person name="Ishii S."/>
            <person name="Saito K."/>
            <person name="Kojima S."/>
            <person name="Sugiyama T."/>
            <person name="Ono T."/>
            <person name="Okano K."/>
            <person name="Yoshikawa Y."/>
            <person name="Aotsuka S."/>
            <person name="Sasaki N."/>
            <person name="Hattori A."/>
            <person name="Okumura K."/>
            <person name="Nagai K."/>
            <person name="Sugano S."/>
            <person name="Isogai T."/>
        </authorList>
    </citation>
    <scope>NUCLEOTIDE SEQUENCE [LARGE SCALE MRNA]</scope>
    <scope>VARIANT THR-59</scope>
    <source>
        <tissue>Embryo</tissue>
    </source>
</reference>
<reference key="4">
    <citation type="submission" date="2005-07" db="EMBL/GenBank/DDBJ databases">
        <authorList>
            <person name="Mural R.J."/>
            <person name="Istrail S."/>
            <person name="Sutton G."/>
            <person name="Florea L."/>
            <person name="Halpern A.L."/>
            <person name="Mobarry C.M."/>
            <person name="Lippert R."/>
            <person name="Walenz B."/>
            <person name="Shatkay H."/>
            <person name="Dew I."/>
            <person name="Miller J.R."/>
            <person name="Flanigan M.J."/>
            <person name="Edwards N.J."/>
            <person name="Bolanos R."/>
            <person name="Fasulo D."/>
            <person name="Halldorsson B.V."/>
            <person name="Hannenhalli S."/>
            <person name="Turner R."/>
            <person name="Yooseph S."/>
            <person name="Lu F."/>
            <person name="Nusskern D.R."/>
            <person name="Shue B.C."/>
            <person name="Zheng X.H."/>
            <person name="Zhong F."/>
            <person name="Delcher A.L."/>
            <person name="Huson D.H."/>
            <person name="Kravitz S.A."/>
            <person name="Mouchard L."/>
            <person name="Reinert K."/>
            <person name="Remington K.A."/>
            <person name="Clark A.G."/>
            <person name="Waterman M.S."/>
            <person name="Eichler E.E."/>
            <person name="Adams M.D."/>
            <person name="Hunkapiller M.W."/>
            <person name="Myers E.W."/>
            <person name="Venter J.C."/>
        </authorList>
    </citation>
    <scope>NUCLEOTIDE SEQUENCE [LARGE SCALE GENOMIC DNA]</scope>
</reference>
<reference key="5">
    <citation type="journal article" date="2004" name="Genome Res.">
        <title>The status, quality, and expansion of the NIH full-length cDNA project: the Mammalian Gene Collection (MGC).</title>
        <authorList>
            <consortium name="The MGC Project Team"/>
        </authorList>
    </citation>
    <scope>NUCLEOTIDE SEQUENCE [LARGE SCALE MRNA]</scope>
    <scope>VARIANT THR-71</scope>
    <source>
        <tissue>Brain</tissue>
        <tissue>Muscle</tissue>
    </source>
</reference>
<reference key="6">
    <citation type="journal article" date="2011" name="BMC Syst. Biol.">
        <title>Initial characterization of the human central proteome.</title>
        <authorList>
            <person name="Burkard T.R."/>
            <person name="Planyavsky M."/>
            <person name="Kaupe I."/>
            <person name="Breitwieser F.P."/>
            <person name="Buerckstuemmer T."/>
            <person name="Bennett K.L."/>
            <person name="Superti-Furga G."/>
            <person name="Colinge J."/>
        </authorList>
    </citation>
    <scope>IDENTIFICATION BY MASS SPECTROMETRY [LARGE SCALE ANALYSIS]</scope>
</reference>
<reference key="7">
    <citation type="journal article" date="2011" name="Sci. Signal.">
        <title>System-wide temporal characterization of the proteome and phosphoproteome of human embryonic stem cell differentiation.</title>
        <authorList>
            <person name="Rigbolt K.T."/>
            <person name="Prokhorova T.A."/>
            <person name="Akimov V."/>
            <person name="Henningsen J."/>
            <person name="Johansen P.T."/>
            <person name="Kratchmarova I."/>
            <person name="Kassem M."/>
            <person name="Mann M."/>
            <person name="Olsen J.V."/>
            <person name="Blagoev B."/>
        </authorList>
    </citation>
    <scope>PHOSPHORYLATION [LARGE SCALE ANALYSIS] AT SER-187</scope>
    <scope>IDENTIFICATION BY MASS SPECTROMETRY [LARGE SCALE ANALYSIS]</scope>
</reference>
<reference key="8">
    <citation type="journal article" date="2012" name="Mol. Cell. Proteomics">
        <title>Human urinary glycoproteomics; attachment site specific analysis of N- and O-linked glycosylations by CID and ECD.</title>
        <authorList>
            <person name="Halim A."/>
            <person name="Nilsson J."/>
            <person name="Ruetschi U."/>
            <person name="Hesse C."/>
            <person name="Larson G."/>
        </authorList>
    </citation>
    <scope>GLYCOSYLATION AT THR-101</scope>
    <scope>STRUCTURE OF CARBOHYDRATES</scope>
    <scope>IDENTIFICATION BY MASS SPECTROMETRY</scope>
</reference>
<reference key="9">
    <citation type="journal article" date="2012" name="Nat. Cell Biol.">
        <title>Syndecan-syntenin-ALIX regulates the biogenesis of exosomes.</title>
        <authorList>
            <person name="Baietti M.F."/>
            <person name="Zhang Z."/>
            <person name="Mortier E."/>
            <person name="Melchior A."/>
            <person name="Degeest G."/>
            <person name="Geeraerts A."/>
            <person name="Ivarsson Y."/>
            <person name="Depoortere F."/>
            <person name="Coomans C."/>
            <person name="Vermeiren E."/>
            <person name="Zimmermann P."/>
            <person name="David G."/>
        </authorList>
    </citation>
    <scope>IDENTIFICATION IN A COMPLEX WITH SDCBP AND PDCD6IP</scope>
</reference>
<reference key="10">
    <citation type="journal article" date="2014" name="J. Proteomics">
        <title>An enzyme assisted RP-RPLC approach for in-depth analysis of human liver phosphoproteome.</title>
        <authorList>
            <person name="Bian Y."/>
            <person name="Song C."/>
            <person name="Cheng K."/>
            <person name="Dong M."/>
            <person name="Wang F."/>
            <person name="Huang J."/>
            <person name="Sun D."/>
            <person name="Wang L."/>
            <person name="Ye M."/>
            <person name="Zou H."/>
        </authorList>
    </citation>
    <scope>IDENTIFICATION BY MASS SPECTROMETRY [LARGE SCALE ANALYSIS]</scope>
    <source>
        <tissue>Liver</tissue>
    </source>
</reference>
<reference key="11">
    <citation type="journal article" date="2015" name="Cell">
        <title>A single kinase generates the majority of the secreted phosphoproteome.</title>
        <authorList>
            <person name="Tagliabracci V.S."/>
            <person name="Wiley S.E."/>
            <person name="Guo X."/>
            <person name="Kinch L.N."/>
            <person name="Durrant E."/>
            <person name="Wen J."/>
            <person name="Xiao J."/>
            <person name="Cui J."/>
            <person name="Nguyen K.B."/>
            <person name="Engel J.L."/>
            <person name="Coon J.J."/>
            <person name="Grishin N."/>
            <person name="Pinna L.A."/>
            <person name="Pagliarini D.J."/>
            <person name="Dixon J.E."/>
        </authorList>
    </citation>
    <scope>PHOSPHORYLATION AT SER-115</scope>
</reference>
<gene>
    <name type="primary">SDC2</name>
    <name type="synonym">HSPG1</name>
</gene>
<protein>
    <recommendedName>
        <fullName>Syndecan-2</fullName>
        <shortName>SYND2</shortName>
    </recommendedName>
    <alternativeName>
        <fullName>Fibroglycan</fullName>
    </alternativeName>
    <alternativeName>
        <fullName>Heparan sulfate proteoglycan core protein</fullName>
        <shortName>HSPG</shortName>
    </alternativeName>
    <cdAntigenName>CD362</cdAntigenName>
</protein>
<name>SDC2_HUMAN</name>
<feature type="signal peptide" evidence="2">
    <location>
        <begin position="1"/>
        <end position="18"/>
    </location>
</feature>
<feature type="chain" id="PRO_0000033503" description="Syndecan-2">
    <location>
        <begin position="19"/>
        <end position="201"/>
    </location>
</feature>
<feature type="topological domain" description="Extracellular" evidence="2">
    <location>
        <begin position="19"/>
        <end position="144"/>
    </location>
</feature>
<feature type="transmembrane region" description="Helical" evidence="2">
    <location>
        <begin position="145"/>
        <end position="169"/>
    </location>
</feature>
<feature type="topological domain" description="Cytoplasmic" evidence="2">
    <location>
        <begin position="170"/>
        <end position="201"/>
    </location>
</feature>
<feature type="region of interest" description="Disordered" evidence="3">
    <location>
        <begin position="42"/>
        <end position="70"/>
    </location>
</feature>
<feature type="region of interest" description="Disordered" evidence="3">
    <location>
        <begin position="90"/>
        <end position="130"/>
    </location>
</feature>
<feature type="region of interest" description="Disordered" evidence="3">
    <location>
        <begin position="178"/>
        <end position="201"/>
    </location>
</feature>
<feature type="compositionally biased region" description="Polar residues" evidence="3">
    <location>
        <begin position="90"/>
        <end position="102"/>
    </location>
</feature>
<feature type="compositionally biased region" description="Basic and acidic residues" evidence="3">
    <location>
        <begin position="103"/>
        <end position="123"/>
    </location>
</feature>
<feature type="site" description="Cleavage of ectodomain" evidence="2">
    <location>
        <begin position="142"/>
        <end position="143"/>
    </location>
</feature>
<feature type="modified residue" description="Phosphoserine; by FAM20C" evidence="9">
    <location>
        <position position="115"/>
    </location>
</feature>
<feature type="modified residue" description="Phosphoserine" evidence="11">
    <location>
        <position position="187"/>
    </location>
</feature>
<feature type="glycosylation site" description="O-linked (Xyl...) (glycosaminoglycan) serine" evidence="2">
    <location>
        <position position="41"/>
    </location>
</feature>
<feature type="glycosylation site" description="O-linked (Xyl...) (glycosaminoglycan) serine" evidence="2">
    <location>
        <position position="55"/>
    </location>
</feature>
<feature type="glycosylation site" description="O-linked (Xyl...) (glycosaminoglycan) serine" evidence="2">
    <location>
        <position position="57"/>
    </location>
</feature>
<feature type="glycosylation site" description="O-linked (GalNAc...) threonine" evidence="6">
    <location>
        <position position="101"/>
    </location>
</feature>
<feature type="sequence variant" id="VAR_034675" description="In dbSNP:rs3816208." evidence="5">
    <original>A</original>
    <variation>T</variation>
    <location>
        <position position="59"/>
    </location>
</feature>
<feature type="sequence variant" id="VAR_034676" description="In dbSNP:rs1042381." evidence="4 8">
    <original>S</original>
    <variation>T</variation>
    <location>
        <position position="71"/>
    </location>
</feature>
<feature type="sequence conflict" description="In Ref. 2; BAB15150." evidence="10" ref="2">
    <original>I</original>
    <variation>T</variation>
    <location>
        <position position="150"/>
    </location>
</feature>
<feature type="helix" evidence="12">
    <location>
        <begin position="143"/>
        <end position="171"/>
    </location>
</feature>
<dbReference type="EMBL" id="J04621">
    <property type="protein sequence ID" value="AAA52701.1"/>
    <property type="status" value="ALT_INIT"/>
    <property type="molecule type" value="mRNA"/>
</dbReference>
<dbReference type="EMBL" id="AK025488">
    <property type="protein sequence ID" value="BAB15150.1"/>
    <property type="molecule type" value="mRNA"/>
</dbReference>
<dbReference type="EMBL" id="AK074530">
    <property type="protein sequence ID" value="BAG51965.1"/>
    <property type="molecule type" value="mRNA"/>
</dbReference>
<dbReference type="EMBL" id="AK097839">
    <property type="protein sequence ID" value="BAG53540.1"/>
    <property type="molecule type" value="mRNA"/>
</dbReference>
<dbReference type="EMBL" id="CH471060">
    <property type="protein sequence ID" value="EAW91755.1"/>
    <property type="molecule type" value="Genomic_DNA"/>
</dbReference>
<dbReference type="EMBL" id="BC030133">
    <property type="protein sequence ID" value="AAH30133.1"/>
    <property type="molecule type" value="mRNA"/>
</dbReference>
<dbReference type="EMBL" id="BC049836">
    <property type="protein sequence ID" value="AAH49836.1"/>
    <property type="molecule type" value="mRNA"/>
</dbReference>
<dbReference type="CCDS" id="CCDS6272.1"/>
<dbReference type="PIR" id="A33880">
    <property type="entry name" value="A33880"/>
</dbReference>
<dbReference type="RefSeq" id="NP_002989.2">
    <property type="nucleotide sequence ID" value="NM_002998.3"/>
</dbReference>
<dbReference type="PDB" id="6ITH">
    <property type="method" value="NMR"/>
    <property type="chains" value="A=143-173"/>
</dbReference>
<dbReference type="PDBsum" id="6ITH"/>
<dbReference type="SASBDB" id="P34741"/>
<dbReference type="SMR" id="P34741"/>
<dbReference type="BioGRID" id="112285">
    <property type="interactions" value="150"/>
</dbReference>
<dbReference type="CORUM" id="P34741"/>
<dbReference type="DIP" id="DIP-29943N"/>
<dbReference type="FunCoup" id="P34741">
    <property type="interactions" value="644"/>
</dbReference>
<dbReference type="IntAct" id="P34741">
    <property type="interactions" value="122"/>
</dbReference>
<dbReference type="MINT" id="P34741"/>
<dbReference type="STRING" id="9606.ENSP00000307046"/>
<dbReference type="BindingDB" id="P34741"/>
<dbReference type="ChEMBL" id="CHEMBL4888448"/>
<dbReference type="DrugBank" id="DB00020">
    <property type="generic name" value="Sargramostim"/>
</dbReference>
<dbReference type="GlyConnect" id="707">
    <property type="glycosylation" value="1 O-Linked glycan (1 site)"/>
</dbReference>
<dbReference type="GlyCosmos" id="P34741">
    <property type="glycosylation" value="5 sites, 4 glycans"/>
</dbReference>
<dbReference type="GlyGen" id="P34741">
    <property type="glycosylation" value="11 sites, 5 O-linked glycans (8 sites)"/>
</dbReference>
<dbReference type="iPTMnet" id="P34741"/>
<dbReference type="PhosphoSitePlus" id="P34741"/>
<dbReference type="BioMuta" id="SDC2"/>
<dbReference type="DMDM" id="158962336"/>
<dbReference type="jPOST" id="P34741"/>
<dbReference type="MassIVE" id="P34741"/>
<dbReference type="PaxDb" id="9606-ENSP00000307046"/>
<dbReference type="PeptideAtlas" id="P34741"/>
<dbReference type="ProteomicsDB" id="54941"/>
<dbReference type="Pumba" id="P34741"/>
<dbReference type="Antibodypedia" id="25987">
    <property type="antibodies" value="286 antibodies from 31 providers"/>
</dbReference>
<dbReference type="DNASU" id="6383"/>
<dbReference type="Ensembl" id="ENST00000302190.9">
    <property type="protein sequence ID" value="ENSP00000307046.4"/>
    <property type="gene ID" value="ENSG00000169439.12"/>
</dbReference>
<dbReference type="GeneID" id="6383"/>
<dbReference type="KEGG" id="hsa:6383"/>
<dbReference type="MANE-Select" id="ENST00000302190.9">
    <property type="protein sequence ID" value="ENSP00000307046.4"/>
    <property type="RefSeq nucleotide sequence ID" value="NM_002998.4"/>
    <property type="RefSeq protein sequence ID" value="NP_002989.2"/>
</dbReference>
<dbReference type="UCSC" id="uc003yhv.2">
    <property type="organism name" value="human"/>
</dbReference>
<dbReference type="AGR" id="HGNC:10659"/>
<dbReference type="CTD" id="6383"/>
<dbReference type="DisGeNET" id="6383"/>
<dbReference type="GeneCards" id="SDC2"/>
<dbReference type="HGNC" id="HGNC:10659">
    <property type="gene designation" value="SDC2"/>
</dbReference>
<dbReference type="HPA" id="ENSG00000169439">
    <property type="expression patterns" value="Tissue enhanced (liver, thyroid gland)"/>
</dbReference>
<dbReference type="MIM" id="142460">
    <property type="type" value="gene"/>
</dbReference>
<dbReference type="neXtProt" id="NX_P34741"/>
<dbReference type="OpenTargets" id="ENSG00000169439"/>
<dbReference type="PharmGKB" id="PA35589"/>
<dbReference type="VEuPathDB" id="HostDB:ENSG00000169439"/>
<dbReference type="eggNOG" id="ENOG502RZ6V">
    <property type="taxonomic scope" value="Eukaryota"/>
</dbReference>
<dbReference type="GeneTree" id="ENSGT00940000157222"/>
<dbReference type="HOGENOM" id="CLU_046599_2_1_1"/>
<dbReference type="InParanoid" id="P34741"/>
<dbReference type="OMA" id="ASASGSX"/>
<dbReference type="OrthoDB" id="10044468at2759"/>
<dbReference type="PAN-GO" id="P34741">
    <property type="GO annotations" value="3 GO annotations based on evolutionary models"/>
</dbReference>
<dbReference type="PhylomeDB" id="P34741"/>
<dbReference type="TreeFam" id="TF320463"/>
<dbReference type="PathwayCommons" id="P34741"/>
<dbReference type="Reactome" id="R-HSA-1971475">
    <property type="pathway name" value="A tetrasaccharide linker sequence is required for GAG synthesis"/>
</dbReference>
<dbReference type="Reactome" id="R-HSA-2022928">
    <property type="pathway name" value="HS-GAG biosynthesis"/>
</dbReference>
<dbReference type="Reactome" id="R-HSA-2024096">
    <property type="pathway name" value="HS-GAG degradation"/>
</dbReference>
<dbReference type="Reactome" id="R-HSA-202733">
    <property type="pathway name" value="Cell surface interactions at the vascular wall"/>
</dbReference>
<dbReference type="Reactome" id="R-HSA-3000170">
    <property type="pathway name" value="Syndecan interactions"/>
</dbReference>
<dbReference type="Reactome" id="R-HSA-3560783">
    <property type="pathway name" value="Defective B4GALT7 causes EDS, progeroid type"/>
</dbReference>
<dbReference type="Reactome" id="R-HSA-3560801">
    <property type="pathway name" value="Defective B3GAT3 causes JDSSDHD"/>
</dbReference>
<dbReference type="Reactome" id="R-HSA-3656237">
    <property type="pathway name" value="Defective EXT2 causes exostoses 2"/>
</dbReference>
<dbReference type="Reactome" id="R-HSA-3656253">
    <property type="pathway name" value="Defective EXT1 causes exostoses 1, TRPS2 and CHDS"/>
</dbReference>
<dbReference type="Reactome" id="R-HSA-381426">
    <property type="pathway name" value="Regulation of Insulin-like Growth Factor (IGF) transport and uptake by Insulin-like Growth Factor Binding Proteins (IGFBPs)"/>
</dbReference>
<dbReference type="Reactome" id="R-HSA-3928662">
    <property type="pathway name" value="EPHB-mediated forward signaling"/>
</dbReference>
<dbReference type="Reactome" id="R-HSA-4420332">
    <property type="pathway name" value="Defective B3GALT6 causes EDSP2 and SEMDJL1"/>
</dbReference>
<dbReference type="Reactome" id="R-HSA-8957275">
    <property type="pathway name" value="Post-translational protein phosphorylation"/>
</dbReference>
<dbReference type="Reactome" id="R-HSA-9694614">
    <property type="pathway name" value="Attachment and Entry"/>
</dbReference>
<dbReference type="Reactome" id="R-HSA-975634">
    <property type="pathway name" value="Retinoid metabolism and transport"/>
</dbReference>
<dbReference type="Reactome" id="R-HSA-9820960">
    <property type="pathway name" value="Respiratory syncytial virus (RSV) attachment and entry"/>
</dbReference>
<dbReference type="Reactome" id="R-HSA-9833110">
    <property type="pathway name" value="RSV-host interactions"/>
</dbReference>
<dbReference type="SignaLink" id="P34741"/>
<dbReference type="SIGNOR" id="P34741"/>
<dbReference type="BioGRID-ORCS" id="6383">
    <property type="hits" value="8 hits in 1151 CRISPR screens"/>
</dbReference>
<dbReference type="ChiTaRS" id="SDC2">
    <property type="organism name" value="human"/>
</dbReference>
<dbReference type="GeneWiki" id="SDC2"/>
<dbReference type="GenomeRNAi" id="6383"/>
<dbReference type="Pharos" id="P34741">
    <property type="development level" value="Tbio"/>
</dbReference>
<dbReference type="PRO" id="PR:P34741"/>
<dbReference type="Proteomes" id="UP000005640">
    <property type="component" value="Chromosome 8"/>
</dbReference>
<dbReference type="RNAct" id="P34741">
    <property type="molecule type" value="protein"/>
</dbReference>
<dbReference type="Bgee" id="ENSG00000169439">
    <property type="expression patterns" value="Expressed in tibia and 207 other cell types or tissues"/>
</dbReference>
<dbReference type="ExpressionAtlas" id="P34741">
    <property type="expression patterns" value="baseline and differential"/>
</dbReference>
<dbReference type="GO" id="GO:0009986">
    <property type="term" value="C:cell surface"/>
    <property type="evidence" value="ECO:0000318"/>
    <property type="project" value="GO_Central"/>
</dbReference>
<dbReference type="GO" id="GO:0062023">
    <property type="term" value="C:collagen-containing extracellular matrix"/>
    <property type="evidence" value="ECO:0007005"/>
    <property type="project" value="BHF-UCL"/>
</dbReference>
<dbReference type="GO" id="GO:0005788">
    <property type="term" value="C:endoplasmic reticulum lumen"/>
    <property type="evidence" value="ECO:0000304"/>
    <property type="project" value="Reactome"/>
</dbReference>
<dbReference type="GO" id="GO:0005796">
    <property type="term" value="C:Golgi lumen"/>
    <property type="evidence" value="ECO:0000304"/>
    <property type="project" value="Reactome"/>
</dbReference>
<dbReference type="GO" id="GO:0043202">
    <property type="term" value="C:lysosomal lumen"/>
    <property type="evidence" value="ECO:0000304"/>
    <property type="project" value="Reactome"/>
</dbReference>
<dbReference type="GO" id="GO:0005886">
    <property type="term" value="C:plasma membrane"/>
    <property type="evidence" value="ECO:0000314"/>
    <property type="project" value="HPA"/>
</dbReference>
<dbReference type="GO" id="GO:0042802">
    <property type="term" value="F:identical protein binding"/>
    <property type="evidence" value="ECO:0000353"/>
    <property type="project" value="IntAct"/>
</dbReference>
<dbReference type="GO" id="GO:0030165">
    <property type="term" value="F:PDZ domain binding"/>
    <property type="evidence" value="ECO:0000353"/>
    <property type="project" value="BHF-UCL"/>
</dbReference>
<dbReference type="GO" id="GO:0016477">
    <property type="term" value="P:cell migration"/>
    <property type="evidence" value="ECO:0000318"/>
    <property type="project" value="GO_Central"/>
</dbReference>
<dbReference type="GO" id="GO:0048813">
    <property type="term" value="P:dendrite morphogenesis"/>
    <property type="evidence" value="ECO:0000318"/>
    <property type="project" value="GO_Central"/>
</dbReference>
<dbReference type="GO" id="GO:0048814">
    <property type="term" value="P:regulation of dendrite morphogenesis"/>
    <property type="evidence" value="ECO:0000250"/>
    <property type="project" value="UniProtKB"/>
</dbReference>
<dbReference type="InterPro" id="IPR003585">
    <property type="entry name" value="Neurexin-like"/>
</dbReference>
<dbReference type="InterPro" id="IPR001050">
    <property type="entry name" value="Syndecan"/>
</dbReference>
<dbReference type="InterPro" id="IPR027789">
    <property type="entry name" value="Syndecan/Neurexin_dom"/>
</dbReference>
<dbReference type="InterPro" id="IPR030479">
    <property type="entry name" value="Syndecan_CS"/>
</dbReference>
<dbReference type="PANTHER" id="PTHR10915">
    <property type="entry name" value="SYNDECAN"/>
    <property type="match status" value="1"/>
</dbReference>
<dbReference type="PANTHER" id="PTHR10915:SF6">
    <property type="entry name" value="SYNDECAN-2"/>
    <property type="match status" value="1"/>
</dbReference>
<dbReference type="Pfam" id="PF01034">
    <property type="entry name" value="Syndecan"/>
    <property type="match status" value="1"/>
</dbReference>
<dbReference type="SMART" id="SM00294">
    <property type="entry name" value="4.1m"/>
    <property type="match status" value="1"/>
</dbReference>
<dbReference type="PROSITE" id="PS00964">
    <property type="entry name" value="SYNDECAN"/>
    <property type="match status" value="1"/>
</dbReference>
<sequence>MRRAWILLTLGLVACVSAESRAELTSDKDMYLDNSSIEEASGVYPIDDDDYASASGSGADEDVESPELTTSRPLPKILLTSAAPKVETTTLNIQNKIPAQTKSPEETDKEKVHLSDSERKMDPAEEDTNVYTEKHSDSLFKRTEVLAAVIAGGVIGFLFAIFLILLLVYRMRKKDEGSYDLGERKPSSAAYQKAPTKEFYA</sequence>
<proteinExistence type="evidence at protein level"/>
<accession>P34741</accession>
<accession>B3KQA3</accession>
<accession>Q6PIS6</accession>
<accession>Q9H6V1</accession>
<evidence type="ECO:0000250" key="1">
    <source>
        <dbReference type="UniProtKB" id="P43407"/>
    </source>
</evidence>
<evidence type="ECO:0000255" key="2"/>
<evidence type="ECO:0000256" key="3">
    <source>
        <dbReference type="SAM" id="MobiDB-lite"/>
    </source>
</evidence>
<evidence type="ECO:0000269" key="4">
    <source>
    </source>
</evidence>
<evidence type="ECO:0000269" key="5">
    <source>
    </source>
</evidence>
<evidence type="ECO:0000269" key="6">
    <source>
    </source>
</evidence>
<evidence type="ECO:0000269" key="7">
    <source>
    </source>
</evidence>
<evidence type="ECO:0000269" key="8">
    <source>
    </source>
</evidence>
<evidence type="ECO:0000269" key="9">
    <source>
    </source>
</evidence>
<evidence type="ECO:0000305" key="10"/>
<evidence type="ECO:0007744" key="11">
    <source>
    </source>
</evidence>
<evidence type="ECO:0007829" key="12">
    <source>
        <dbReference type="PDB" id="6ITH"/>
    </source>
</evidence>